<gene>
    <name evidence="1" type="primary">thiE</name>
    <name type="ordered locus">SPAB_05153</name>
</gene>
<proteinExistence type="inferred from homology"/>
<protein>
    <recommendedName>
        <fullName evidence="1">Thiamine-phosphate synthase</fullName>
        <shortName evidence="1">TP synthase</shortName>
        <shortName evidence="1">TPS</shortName>
        <ecNumber evidence="1">2.5.1.3</ecNumber>
    </recommendedName>
    <alternativeName>
        <fullName evidence="1">Thiamine-phosphate pyrophosphorylase</fullName>
        <shortName evidence="1">TMP pyrophosphorylase</shortName>
        <shortName evidence="1">TMP-PPase</shortName>
    </alternativeName>
</protein>
<reference key="1">
    <citation type="submission" date="2007-11" db="EMBL/GenBank/DDBJ databases">
        <authorList>
            <consortium name="The Salmonella enterica serovar Paratyphi B Genome Sequencing Project"/>
            <person name="McClelland M."/>
            <person name="Sanderson E.K."/>
            <person name="Porwollik S."/>
            <person name="Spieth J."/>
            <person name="Clifton W.S."/>
            <person name="Fulton R."/>
            <person name="Cordes M."/>
            <person name="Wollam A."/>
            <person name="Shah N."/>
            <person name="Pepin K."/>
            <person name="Bhonagiri V."/>
            <person name="Nash W."/>
            <person name="Johnson M."/>
            <person name="Thiruvilangam P."/>
            <person name="Wilson R."/>
        </authorList>
    </citation>
    <scope>NUCLEOTIDE SEQUENCE [LARGE SCALE GENOMIC DNA]</scope>
    <source>
        <strain>ATCC BAA-1250 / SPB7</strain>
    </source>
</reference>
<dbReference type="EC" id="2.5.1.3" evidence="1"/>
<dbReference type="EMBL" id="CP000886">
    <property type="protein sequence ID" value="ABX70434.1"/>
    <property type="molecule type" value="Genomic_DNA"/>
</dbReference>
<dbReference type="RefSeq" id="WP_000284640.1">
    <property type="nucleotide sequence ID" value="NC_010102.1"/>
</dbReference>
<dbReference type="SMR" id="A9N0K5"/>
<dbReference type="KEGG" id="spq:SPAB_05153"/>
<dbReference type="PATRIC" id="fig|1016998.12.peg.4827"/>
<dbReference type="HOGENOM" id="CLU_018272_3_3_6"/>
<dbReference type="BioCyc" id="SENT1016998:SPAB_RS20970-MONOMER"/>
<dbReference type="UniPathway" id="UPA00060">
    <property type="reaction ID" value="UER00141"/>
</dbReference>
<dbReference type="Proteomes" id="UP000008556">
    <property type="component" value="Chromosome"/>
</dbReference>
<dbReference type="GO" id="GO:0005737">
    <property type="term" value="C:cytoplasm"/>
    <property type="evidence" value="ECO:0007669"/>
    <property type="project" value="TreeGrafter"/>
</dbReference>
<dbReference type="GO" id="GO:0000287">
    <property type="term" value="F:magnesium ion binding"/>
    <property type="evidence" value="ECO:0007669"/>
    <property type="project" value="UniProtKB-UniRule"/>
</dbReference>
<dbReference type="GO" id="GO:0004789">
    <property type="term" value="F:thiamine-phosphate diphosphorylase activity"/>
    <property type="evidence" value="ECO:0007669"/>
    <property type="project" value="UniProtKB-UniRule"/>
</dbReference>
<dbReference type="GO" id="GO:0009228">
    <property type="term" value="P:thiamine biosynthetic process"/>
    <property type="evidence" value="ECO:0007669"/>
    <property type="project" value="UniProtKB-KW"/>
</dbReference>
<dbReference type="GO" id="GO:0009229">
    <property type="term" value="P:thiamine diphosphate biosynthetic process"/>
    <property type="evidence" value="ECO:0007669"/>
    <property type="project" value="UniProtKB-UniRule"/>
</dbReference>
<dbReference type="CDD" id="cd00564">
    <property type="entry name" value="TMP_TenI"/>
    <property type="match status" value="1"/>
</dbReference>
<dbReference type="FunFam" id="3.20.20.70:FF:000064">
    <property type="entry name" value="Thiamine-phosphate synthase"/>
    <property type="match status" value="1"/>
</dbReference>
<dbReference type="Gene3D" id="3.20.20.70">
    <property type="entry name" value="Aldolase class I"/>
    <property type="match status" value="1"/>
</dbReference>
<dbReference type="HAMAP" id="MF_00097">
    <property type="entry name" value="TMP_synthase"/>
    <property type="match status" value="1"/>
</dbReference>
<dbReference type="InterPro" id="IPR013785">
    <property type="entry name" value="Aldolase_TIM"/>
</dbReference>
<dbReference type="InterPro" id="IPR036206">
    <property type="entry name" value="ThiamineP_synth_sf"/>
</dbReference>
<dbReference type="InterPro" id="IPR022998">
    <property type="entry name" value="ThiamineP_synth_TenI"/>
</dbReference>
<dbReference type="InterPro" id="IPR034291">
    <property type="entry name" value="TMP_synthase"/>
</dbReference>
<dbReference type="NCBIfam" id="NF002904">
    <property type="entry name" value="PRK03512.1"/>
    <property type="match status" value="1"/>
</dbReference>
<dbReference type="NCBIfam" id="TIGR00693">
    <property type="entry name" value="thiE"/>
    <property type="match status" value="1"/>
</dbReference>
<dbReference type="PANTHER" id="PTHR20857">
    <property type="entry name" value="THIAMINE-PHOSPHATE PYROPHOSPHORYLASE"/>
    <property type="match status" value="1"/>
</dbReference>
<dbReference type="PANTHER" id="PTHR20857:SF15">
    <property type="entry name" value="THIAMINE-PHOSPHATE SYNTHASE"/>
    <property type="match status" value="1"/>
</dbReference>
<dbReference type="Pfam" id="PF02581">
    <property type="entry name" value="TMP-TENI"/>
    <property type="match status" value="1"/>
</dbReference>
<dbReference type="SUPFAM" id="SSF51391">
    <property type="entry name" value="Thiamin phosphate synthase"/>
    <property type="match status" value="1"/>
</dbReference>
<evidence type="ECO:0000255" key="1">
    <source>
        <dbReference type="HAMAP-Rule" id="MF_00097"/>
    </source>
</evidence>
<organism>
    <name type="scientific">Salmonella paratyphi B (strain ATCC BAA-1250 / SPB7)</name>
    <dbReference type="NCBI Taxonomy" id="1016998"/>
    <lineage>
        <taxon>Bacteria</taxon>
        <taxon>Pseudomonadati</taxon>
        <taxon>Pseudomonadota</taxon>
        <taxon>Gammaproteobacteria</taxon>
        <taxon>Enterobacterales</taxon>
        <taxon>Enterobacteriaceae</taxon>
        <taxon>Salmonella</taxon>
    </lineage>
</organism>
<keyword id="KW-0460">Magnesium</keyword>
<keyword id="KW-0479">Metal-binding</keyword>
<keyword id="KW-0784">Thiamine biosynthesis</keyword>
<keyword id="KW-0808">Transferase</keyword>
<feature type="chain" id="PRO_1000075576" description="Thiamine-phosphate synthase">
    <location>
        <begin position="1"/>
        <end position="211"/>
    </location>
</feature>
<feature type="binding site" evidence="1">
    <location>
        <begin position="37"/>
        <end position="41"/>
    </location>
    <ligand>
        <name>4-amino-2-methyl-5-(diphosphooxymethyl)pyrimidine</name>
        <dbReference type="ChEBI" id="CHEBI:57841"/>
    </ligand>
</feature>
<feature type="binding site" evidence="1">
    <location>
        <position position="69"/>
    </location>
    <ligand>
        <name>4-amino-2-methyl-5-(diphosphooxymethyl)pyrimidine</name>
        <dbReference type="ChEBI" id="CHEBI:57841"/>
    </ligand>
</feature>
<feature type="binding site" evidence="1">
    <location>
        <position position="70"/>
    </location>
    <ligand>
        <name>Mg(2+)</name>
        <dbReference type="ChEBI" id="CHEBI:18420"/>
    </ligand>
</feature>
<feature type="binding site" evidence="1">
    <location>
        <position position="89"/>
    </location>
    <ligand>
        <name>Mg(2+)</name>
        <dbReference type="ChEBI" id="CHEBI:18420"/>
    </ligand>
</feature>
<feature type="binding site" evidence="1">
    <location>
        <position position="108"/>
    </location>
    <ligand>
        <name>4-amino-2-methyl-5-(diphosphooxymethyl)pyrimidine</name>
        <dbReference type="ChEBI" id="CHEBI:57841"/>
    </ligand>
</feature>
<feature type="binding site" evidence="1">
    <location>
        <begin position="134"/>
        <end position="136"/>
    </location>
    <ligand>
        <name>2-[(2R,5Z)-2-carboxy-4-methylthiazol-5(2H)-ylidene]ethyl phosphate</name>
        <dbReference type="ChEBI" id="CHEBI:62899"/>
    </ligand>
</feature>
<feature type="binding site" evidence="1">
    <location>
        <position position="137"/>
    </location>
    <ligand>
        <name>4-amino-2-methyl-5-(diphosphooxymethyl)pyrimidine</name>
        <dbReference type="ChEBI" id="CHEBI:57841"/>
    </ligand>
</feature>
<feature type="binding site" evidence="1">
    <location>
        <position position="166"/>
    </location>
    <ligand>
        <name>2-[(2R,5Z)-2-carboxy-4-methylthiazol-5(2H)-ylidene]ethyl phosphate</name>
        <dbReference type="ChEBI" id="CHEBI:62899"/>
    </ligand>
</feature>
<feature type="binding site" evidence="1">
    <location>
        <begin position="186"/>
        <end position="187"/>
    </location>
    <ligand>
        <name>2-[(2R,5Z)-2-carboxy-4-methylthiazol-5(2H)-ylidene]ethyl phosphate</name>
        <dbReference type="ChEBI" id="CHEBI:62899"/>
    </ligand>
</feature>
<accession>A9N0K5</accession>
<sequence>MYQPDFPTVPFRLGLYPVVDSVAWIERLLEAGVRTIQLRIKDKRDEEVEADVIAAIALGRRYNARLFINDYWRLAIKHRAYGVHLGQEDLETTDLKAIQAAGLRLGVSTHNDMEIDVALAAKPSYIALGHVFPTQTKQMPSAPQGLAQLASHIERLADYPTVAIGGISLERAPAVLATGVGSIAVVSAITQAADWREATAELLAIAGVGDE</sequence>
<comment type="function">
    <text evidence="1">Condenses 4-methyl-5-(beta-hydroxyethyl)thiazole monophosphate (THZ-P) and 2-methyl-4-amino-5-hydroxymethyl pyrimidine pyrophosphate (HMP-PP) to form thiamine monophosphate (TMP).</text>
</comment>
<comment type="catalytic activity">
    <reaction evidence="1">
        <text>2-[(2R,5Z)-2-carboxy-4-methylthiazol-5(2H)-ylidene]ethyl phosphate + 4-amino-2-methyl-5-(diphosphooxymethyl)pyrimidine + 2 H(+) = thiamine phosphate + CO2 + diphosphate</text>
        <dbReference type="Rhea" id="RHEA:47844"/>
        <dbReference type="ChEBI" id="CHEBI:15378"/>
        <dbReference type="ChEBI" id="CHEBI:16526"/>
        <dbReference type="ChEBI" id="CHEBI:33019"/>
        <dbReference type="ChEBI" id="CHEBI:37575"/>
        <dbReference type="ChEBI" id="CHEBI:57841"/>
        <dbReference type="ChEBI" id="CHEBI:62899"/>
        <dbReference type="EC" id="2.5.1.3"/>
    </reaction>
</comment>
<comment type="catalytic activity">
    <reaction evidence="1">
        <text>2-(2-carboxy-4-methylthiazol-5-yl)ethyl phosphate + 4-amino-2-methyl-5-(diphosphooxymethyl)pyrimidine + 2 H(+) = thiamine phosphate + CO2 + diphosphate</text>
        <dbReference type="Rhea" id="RHEA:47848"/>
        <dbReference type="ChEBI" id="CHEBI:15378"/>
        <dbReference type="ChEBI" id="CHEBI:16526"/>
        <dbReference type="ChEBI" id="CHEBI:33019"/>
        <dbReference type="ChEBI" id="CHEBI:37575"/>
        <dbReference type="ChEBI" id="CHEBI:57841"/>
        <dbReference type="ChEBI" id="CHEBI:62890"/>
        <dbReference type="EC" id="2.5.1.3"/>
    </reaction>
</comment>
<comment type="catalytic activity">
    <reaction evidence="1">
        <text>4-methyl-5-(2-phosphooxyethyl)-thiazole + 4-amino-2-methyl-5-(diphosphooxymethyl)pyrimidine + H(+) = thiamine phosphate + diphosphate</text>
        <dbReference type="Rhea" id="RHEA:22328"/>
        <dbReference type="ChEBI" id="CHEBI:15378"/>
        <dbReference type="ChEBI" id="CHEBI:33019"/>
        <dbReference type="ChEBI" id="CHEBI:37575"/>
        <dbReference type="ChEBI" id="CHEBI:57841"/>
        <dbReference type="ChEBI" id="CHEBI:58296"/>
        <dbReference type="EC" id="2.5.1.3"/>
    </reaction>
</comment>
<comment type="cofactor">
    <cofactor evidence="1">
        <name>Mg(2+)</name>
        <dbReference type="ChEBI" id="CHEBI:18420"/>
    </cofactor>
    <text evidence="1">Binds 1 Mg(2+) ion per subunit.</text>
</comment>
<comment type="pathway">
    <text evidence="1">Cofactor biosynthesis; thiamine diphosphate biosynthesis; thiamine phosphate from 4-amino-2-methyl-5-diphosphomethylpyrimidine and 4-methyl-5-(2-phosphoethyl)-thiazole: step 1/1.</text>
</comment>
<comment type="similarity">
    <text evidence="1">Belongs to the thiamine-phosphate synthase family.</text>
</comment>
<name>THIE_SALPB</name>